<evidence type="ECO:0000255" key="1">
    <source>
        <dbReference type="HAMAP-Rule" id="MF_00061"/>
    </source>
</evidence>
<feature type="chain" id="PRO_1000007806" description="4-diphosphocytidyl-2-C-methyl-D-erythritol kinase">
    <location>
        <begin position="1"/>
        <end position="301"/>
    </location>
</feature>
<feature type="active site" evidence="1">
    <location>
        <position position="10"/>
    </location>
</feature>
<feature type="active site" evidence="1">
    <location>
        <position position="138"/>
    </location>
</feature>
<feature type="binding site" evidence="1">
    <location>
        <begin position="96"/>
        <end position="106"/>
    </location>
    <ligand>
        <name>ATP</name>
        <dbReference type="ChEBI" id="CHEBI:30616"/>
    </ligand>
</feature>
<reference key="1">
    <citation type="journal article" date="2006" name="Nat. Biotechnol.">
        <title>Genome sequence of the ubiquitous hydrocarbon-degrading marine bacterium Alcanivorax borkumensis.</title>
        <authorList>
            <person name="Schneiker S."/>
            <person name="Martins dos Santos V.A.P."/>
            <person name="Bartels D."/>
            <person name="Bekel T."/>
            <person name="Brecht M."/>
            <person name="Buhrmester J."/>
            <person name="Chernikova T.N."/>
            <person name="Denaro R."/>
            <person name="Ferrer M."/>
            <person name="Gertler C."/>
            <person name="Goesmann A."/>
            <person name="Golyshina O.V."/>
            <person name="Kaminski F."/>
            <person name="Khachane A.N."/>
            <person name="Lang S."/>
            <person name="Linke B."/>
            <person name="McHardy A.C."/>
            <person name="Meyer F."/>
            <person name="Nechitaylo T."/>
            <person name="Puehler A."/>
            <person name="Regenhardt D."/>
            <person name="Rupp O."/>
            <person name="Sabirova J.S."/>
            <person name="Selbitschka W."/>
            <person name="Yakimov M.M."/>
            <person name="Timmis K.N."/>
            <person name="Vorhoelter F.-J."/>
            <person name="Weidner S."/>
            <person name="Kaiser O."/>
            <person name="Golyshin P.N."/>
        </authorList>
    </citation>
    <scope>NUCLEOTIDE SEQUENCE [LARGE SCALE GENOMIC DNA]</scope>
    <source>
        <strain>ATCC 700651 / DSM 11573 / NCIMB 13689 / SK2</strain>
    </source>
</reference>
<dbReference type="EC" id="2.7.1.148" evidence="1"/>
<dbReference type="EMBL" id="AM286690">
    <property type="protein sequence ID" value="CAL15967.1"/>
    <property type="molecule type" value="Genomic_DNA"/>
</dbReference>
<dbReference type="RefSeq" id="WP_011587805.1">
    <property type="nucleotide sequence ID" value="NC_008260.1"/>
</dbReference>
<dbReference type="SMR" id="Q0VS81"/>
<dbReference type="STRING" id="393595.ABO_0519"/>
<dbReference type="KEGG" id="abo:ABO_0519"/>
<dbReference type="eggNOG" id="COG1947">
    <property type="taxonomic scope" value="Bacteria"/>
</dbReference>
<dbReference type="HOGENOM" id="CLU_053057_3_0_6"/>
<dbReference type="OrthoDB" id="9809438at2"/>
<dbReference type="UniPathway" id="UPA00056">
    <property type="reaction ID" value="UER00094"/>
</dbReference>
<dbReference type="Proteomes" id="UP000008871">
    <property type="component" value="Chromosome"/>
</dbReference>
<dbReference type="GO" id="GO:0050515">
    <property type="term" value="F:4-(cytidine 5'-diphospho)-2-C-methyl-D-erythritol kinase activity"/>
    <property type="evidence" value="ECO:0007669"/>
    <property type="project" value="UniProtKB-UniRule"/>
</dbReference>
<dbReference type="GO" id="GO:0005524">
    <property type="term" value="F:ATP binding"/>
    <property type="evidence" value="ECO:0007669"/>
    <property type="project" value="UniProtKB-UniRule"/>
</dbReference>
<dbReference type="GO" id="GO:0019288">
    <property type="term" value="P:isopentenyl diphosphate biosynthetic process, methylerythritol 4-phosphate pathway"/>
    <property type="evidence" value="ECO:0007669"/>
    <property type="project" value="UniProtKB-UniRule"/>
</dbReference>
<dbReference type="GO" id="GO:0016114">
    <property type="term" value="P:terpenoid biosynthetic process"/>
    <property type="evidence" value="ECO:0007669"/>
    <property type="project" value="InterPro"/>
</dbReference>
<dbReference type="Gene3D" id="3.30.230.10">
    <property type="match status" value="1"/>
</dbReference>
<dbReference type="Gene3D" id="3.30.70.890">
    <property type="entry name" value="GHMP kinase, C-terminal domain"/>
    <property type="match status" value="1"/>
</dbReference>
<dbReference type="HAMAP" id="MF_00061">
    <property type="entry name" value="IspE"/>
    <property type="match status" value="1"/>
</dbReference>
<dbReference type="InterPro" id="IPR013750">
    <property type="entry name" value="GHMP_kinase_C_dom"/>
</dbReference>
<dbReference type="InterPro" id="IPR036554">
    <property type="entry name" value="GHMP_kinase_C_sf"/>
</dbReference>
<dbReference type="InterPro" id="IPR006204">
    <property type="entry name" value="GHMP_kinase_N_dom"/>
</dbReference>
<dbReference type="InterPro" id="IPR004424">
    <property type="entry name" value="IspE"/>
</dbReference>
<dbReference type="InterPro" id="IPR020568">
    <property type="entry name" value="Ribosomal_Su5_D2-typ_SF"/>
</dbReference>
<dbReference type="InterPro" id="IPR014721">
    <property type="entry name" value="Ribsml_uS5_D2-typ_fold_subgr"/>
</dbReference>
<dbReference type="NCBIfam" id="TIGR00154">
    <property type="entry name" value="ispE"/>
    <property type="match status" value="1"/>
</dbReference>
<dbReference type="NCBIfam" id="NF011202">
    <property type="entry name" value="PRK14608.1"/>
    <property type="match status" value="1"/>
</dbReference>
<dbReference type="PANTHER" id="PTHR43527">
    <property type="entry name" value="4-DIPHOSPHOCYTIDYL-2-C-METHYL-D-ERYTHRITOL KINASE, CHLOROPLASTIC"/>
    <property type="match status" value="1"/>
</dbReference>
<dbReference type="PANTHER" id="PTHR43527:SF2">
    <property type="entry name" value="4-DIPHOSPHOCYTIDYL-2-C-METHYL-D-ERYTHRITOL KINASE, CHLOROPLASTIC"/>
    <property type="match status" value="1"/>
</dbReference>
<dbReference type="Pfam" id="PF08544">
    <property type="entry name" value="GHMP_kinases_C"/>
    <property type="match status" value="1"/>
</dbReference>
<dbReference type="Pfam" id="PF00288">
    <property type="entry name" value="GHMP_kinases_N"/>
    <property type="match status" value="1"/>
</dbReference>
<dbReference type="PIRSF" id="PIRSF010376">
    <property type="entry name" value="IspE"/>
    <property type="match status" value="1"/>
</dbReference>
<dbReference type="SUPFAM" id="SSF55060">
    <property type="entry name" value="GHMP Kinase, C-terminal domain"/>
    <property type="match status" value="1"/>
</dbReference>
<dbReference type="SUPFAM" id="SSF54211">
    <property type="entry name" value="Ribosomal protein S5 domain 2-like"/>
    <property type="match status" value="1"/>
</dbReference>
<name>ISPE_ALCBS</name>
<accession>Q0VS81</accession>
<proteinExistence type="inferred from homology"/>
<comment type="function">
    <text evidence="1">Catalyzes the phosphorylation of the position 2 hydroxy group of 4-diphosphocytidyl-2C-methyl-D-erythritol.</text>
</comment>
<comment type="catalytic activity">
    <reaction evidence="1">
        <text>4-CDP-2-C-methyl-D-erythritol + ATP = 4-CDP-2-C-methyl-D-erythritol 2-phosphate + ADP + H(+)</text>
        <dbReference type="Rhea" id="RHEA:18437"/>
        <dbReference type="ChEBI" id="CHEBI:15378"/>
        <dbReference type="ChEBI" id="CHEBI:30616"/>
        <dbReference type="ChEBI" id="CHEBI:57823"/>
        <dbReference type="ChEBI" id="CHEBI:57919"/>
        <dbReference type="ChEBI" id="CHEBI:456216"/>
        <dbReference type="EC" id="2.7.1.148"/>
    </reaction>
</comment>
<comment type="pathway">
    <text evidence="1">Isoprenoid biosynthesis; isopentenyl diphosphate biosynthesis via DXP pathway; isopentenyl diphosphate from 1-deoxy-D-xylulose 5-phosphate: step 3/6.</text>
</comment>
<comment type="similarity">
    <text evidence="1">Belongs to the GHMP kinase family. IspE subfamily.</text>
</comment>
<protein>
    <recommendedName>
        <fullName evidence="1">4-diphosphocytidyl-2-C-methyl-D-erythritol kinase</fullName>
        <shortName evidence="1">CMK</shortName>
        <ecNumber evidence="1">2.7.1.148</ecNumber>
    </recommendedName>
    <alternativeName>
        <fullName evidence="1">4-(cytidine-5'-diphospho)-2-C-methyl-D-erythritol kinase</fullName>
    </alternativeName>
</protein>
<keyword id="KW-0067">ATP-binding</keyword>
<keyword id="KW-0414">Isoprene biosynthesis</keyword>
<keyword id="KW-0418">Kinase</keyword>
<keyword id="KW-0547">Nucleotide-binding</keyword>
<keyword id="KW-1185">Reference proteome</keyword>
<keyword id="KW-0808">Transferase</keyword>
<sequence length="301" mass="32147">MTLTLPAPAKLNLFLHITGRRDDGYHQLQTVFALLDHGDTLRFSPADTLSLQCHQEGGASDLPTDDSNLILQAARALQAHTGSSKGAAITLTKRLPMGGGVGGGSSDAATALLGLNAFWALGLTLQELAHIGLTLGADVPVFVFGKSAWAEGVGEKINPIILPNDAFLVVHPGIHVSTARIFGDQQLTRDTPISKLPASLETVLTREFHNDCEAVATQHFPEIGKTLDWLKQHTGNARMTGTGACCFSRLTGLQQGQQLLQQLPQHWTGFVARSCNTSPLHQILGEALAKFRETKNSGKPA</sequence>
<organism>
    <name type="scientific">Alcanivorax borkumensis (strain ATCC 700651 / DSM 11573 / NCIMB 13689 / SK2)</name>
    <dbReference type="NCBI Taxonomy" id="393595"/>
    <lineage>
        <taxon>Bacteria</taxon>
        <taxon>Pseudomonadati</taxon>
        <taxon>Pseudomonadota</taxon>
        <taxon>Gammaproteobacteria</taxon>
        <taxon>Oceanospirillales</taxon>
        <taxon>Alcanivoracaceae</taxon>
        <taxon>Alcanivorax</taxon>
    </lineage>
</organism>
<gene>
    <name evidence="1" type="primary">ispE</name>
    <name type="ordered locus">ABO_0519</name>
</gene>